<reference key="1">
    <citation type="submission" date="2008-10" db="EMBL/GenBank/DDBJ databases">
        <title>Genome sequence of Bacillus cereus G9842.</title>
        <authorList>
            <person name="Dodson R.J."/>
            <person name="Durkin A.S."/>
            <person name="Rosovitz M.J."/>
            <person name="Rasko D.A."/>
            <person name="Hoffmaster A."/>
            <person name="Ravel J."/>
            <person name="Sutton G."/>
        </authorList>
    </citation>
    <scope>NUCLEOTIDE SEQUENCE [LARGE SCALE GENOMIC DNA]</scope>
    <source>
        <strain>G9842</strain>
    </source>
</reference>
<protein>
    <recommendedName>
        <fullName evidence="1">Holliday junction resolvase RecU</fullName>
        <ecNumber evidence="1">3.1.21.10</ecNumber>
    </recommendedName>
    <alternativeName>
        <fullName evidence="1">Recombination protein U homolog</fullName>
    </alternativeName>
</protein>
<dbReference type="EC" id="3.1.21.10" evidence="1"/>
<dbReference type="EMBL" id="CP001186">
    <property type="protein sequence ID" value="ACK94154.1"/>
    <property type="molecule type" value="Genomic_DNA"/>
</dbReference>
<dbReference type="RefSeq" id="WP_000155599.1">
    <property type="nucleotide sequence ID" value="NC_011772.1"/>
</dbReference>
<dbReference type="SMR" id="B7IPC9"/>
<dbReference type="GeneID" id="67466029"/>
<dbReference type="KEGG" id="bcg:BCG9842_B3738"/>
<dbReference type="HOGENOM" id="CLU_096340_0_0_9"/>
<dbReference type="Proteomes" id="UP000006744">
    <property type="component" value="Chromosome"/>
</dbReference>
<dbReference type="GO" id="GO:0005737">
    <property type="term" value="C:cytoplasm"/>
    <property type="evidence" value="ECO:0007669"/>
    <property type="project" value="UniProtKB-SubCell"/>
</dbReference>
<dbReference type="GO" id="GO:0004519">
    <property type="term" value="F:endonuclease activity"/>
    <property type="evidence" value="ECO:0007669"/>
    <property type="project" value="UniProtKB-UniRule"/>
</dbReference>
<dbReference type="GO" id="GO:0000287">
    <property type="term" value="F:magnesium ion binding"/>
    <property type="evidence" value="ECO:0007669"/>
    <property type="project" value="UniProtKB-UniRule"/>
</dbReference>
<dbReference type="GO" id="GO:0003676">
    <property type="term" value="F:nucleic acid binding"/>
    <property type="evidence" value="ECO:0007669"/>
    <property type="project" value="InterPro"/>
</dbReference>
<dbReference type="GO" id="GO:0007059">
    <property type="term" value="P:chromosome segregation"/>
    <property type="evidence" value="ECO:0007669"/>
    <property type="project" value="UniProtKB-UniRule"/>
</dbReference>
<dbReference type="GO" id="GO:0006310">
    <property type="term" value="P:DNA recombination"/>
    <property type="evidence" value="ECO:0007669"/>
    <property type="project" value="UniProtKB-UniRule"/>
</dbReference>
<dbReference type="GO" id="GO:0006281">
    <property type="term" value="P:DNA repair"/>
    <property type="evidence" value="ECO:0007669"/>
    <property type="project" value="UniProtKB-UniRule"/>
</dbReference>
<dbReference type="CDD" id="cd22354">
    <property type="entry name" value="RecU-like"/>
    <property type="match status" value="1"/>
</dbReference>
<dbReference type="Gene3D" id="3.40.1350.10">
    <property type="match status" value="1"/>
</dbReference>
<dbReference type="HAMAP" id="MF_00130">
    <property type="entry name" value="RecU"/>
    <property type="match status" value="1"/>
</dbReference>
<dbReference type="InterPro" id="IPR004612">
    <property type="entry name" value="Resolv_RecU"/>
</dbReference>
<dbReference type="InterPro" id="IPR011335">
    <property type="entry name" value="Restrct_endonuc-II-like"/>
</dbReference>
<dbReference type="InterPro" id="IPR011856">
    <property type="entry name" value="tRNA_endonuc-like_dom_sf"/>
</dbReference>
<dbReference type="NCBIfam" id="NF002581">
    <property type="entry name" value="PRK02234.1-2"/>
    <property type="match status" value="1"/>
</dbReference>
<dbReference type="NCBIfam" id="NF002584">
    <property type="entry name" value="PRK02234.1-5"/>
    <property type="match status" value="1"/>
</dbReference>
<dbReference type="NCBIfam" id="NF002585">
    <property type="entry name" value="PRK02234.1-6"/>
    <property type="match status" value="1"/>
</dbReference>
<dbReference type="NCBIfam" id="TIGR00648">
    <property type="entry name" value="recU"/>
    <property type="match status" value="1"/>
</dbReference>
<dbReference type="Pfam" id="PF03838">
    <property type="entry name" value="RecU"/>
    <property type="match status" value="1"/>
</dbReference>
<dbReference type="PIRSF" id="PIRSF037785">
    <property type="entry name" value="RecU"/>
    <property type="match status" value="1"/>
</dbReference>
<dbReference type="SUPFAM" id="SSF52980">
    <property type="entry name" value="Restriction endonuclease-like"/>
    <property type="match status" value="1"/>
</dbReference>
<proteinExistence type="inferred from homology"/>
<name>RECU_BACC2</name>
<accession>B7IPC9</accession>
<organism>
    <name type="scientific">Bacillus cereus (strain G9842)</name>
    <dbReference type="NCBI Taxonomy" id="405531"/>
    <lineage>
        <taxon>Bacteria</taxon>
        <taxon>Bacillati</taxon>
        <taxon>Bacillota</taxon>
        <taxon>Bacilli</taxon>
        <taxon>Bacillales</taxon>
        <taxon>Bacillaceae</taxon>
        <taxon>Bacillus</taxon>
        <taxon>Bacillus cereus group</taxon>
    </lineage>
</organism>
<sequence>MTIRYPNGKRYNQASQPQKTPIKTHTYSNRGMSLEEELNETNQYYLTHNIACVHKKPTPLQIVKVDYPARSAAVVKEAYFKQPSTTDYNGVYKGKYIDFEAKETKNKTSFPLQNFHLHQIEHMKQVVAHNGIAFVIIKFTLFDEFYLLDAKHIIAFWNRQNTGGRKSITKEEIEEHGSLLSCGYHPRIDYIRVLDTVYFS</sequence>
<evidence type="ECO:0000255" key="1">
    <source>
        <dbReference type="HAMAP-Rule" id="MF_00130"/>
    </source>
</evidence>
<evidence type="ECO:0000256" key="2">
    <source>
        <dbReference type="SAM" id="MobiDB-lite"/>
    </source>
</evidence>
<comment type="function">
    <text evidence="1">Endonuclease that resolves Holliday junction intermediates in genetic recombination. Cleaves mobile four-strand junctions by introducing symmetrical nicks in paired strands. Promotes annealing of linear ssDNA with homologous dsDNA. Required for DNA repair, homologous recombination and chromosome segregation.</text>
</comment>
<comment type="catalytic activity">
    <reaction evidence="1">
        <text>Endonucleolytic cleavage at a junction such as a reciprocal single-stranded crossover between two homologous DNA duplexes (Holliday junction).</text>
        <dbReference type="EC" id="3.1.21.10"/>
    </reaction>
</comment>
<comment type="cofactor">
    <cofactor evidence="1">
        <name>Mg(2+)</name>
        <dbReference type="ChEBI" id="CHEBI:18420"/>
    </cofactor>
    <text evidence="1">Binds 1 Mg(2+) ion per subunit.</text>
</comment>
<comment type="subcellular location">
    <subcellularLocation>
        <location evidence="1">Cytoplasm</location>
    </subcellularLocation>
</comment>
<comment type="similarity">
    <text evidence="1">Belongs to the RecU family.</text>
</comment>
<gene>
    <name evidence="1" type="primary">recU</name>
    <name type="ordered locus">BCG9842_B3738</name>
</gene>
<feature type="chain" id="PRO_1000117723" description="Holliday junction resolvase RecU">
    <location>
        <begin position="1"/>
        <end position="200"/>
    </location>
</feature>
<feature type="region of interest" description="Disordered" evidence="2">
    <location>
        <begin position="1"/>
        <end position="25"/>
    </location>
</feature>
<feature type="compositionally biased region" description="Polar residues" evidence="2">
    <location>
        <begin position="10"/>
        <end position="25"/>
    </location>
</feature>
<feature type="binding site" evidence="1">
    <location>
        <position position="85"/>
    </location>
    <ligand>
        <name>Mg(2+)</name>
        <dbReference type="ChEBI" id="CHEBI:18420"/>
    </ligand>
</feature>
<feature type="binding site" evidence="1">
    <location>
        <position position="87"/>
    </location>
    <ligand>
        <name>Mg(2+)</name>
        <dbReference type="ChEBI" id="CHEBI:18420"/>
    </ligand>
</feature>
<feature type="binding site" evidence="1">
    <location>
        <position position="100"/>
    </location>
    <ligand>
        <name>Mg(2+)</name>
        <dbReference type="ChEBI" id="CHEBI:18420"/>
    </ligand>
</feature>
<feature type="binding site" evidence="1">
    <location>
        <position position="119"/>
    </location>
    <ligand>
        <name>Mg(2+)</name>
        <dbReference type="ChEBI" id="CHEBI:18420"/>
    </ligand>
</feature>
<feature type="site" description="Transition state stabilizer" evidence="1">
    <location>
        <position position="102"/>
    </location>
</feature>
<keyword id="KW-0963">Cytoplasm</keyword>
<keyword id="KW-0227">DNA damage</keyword>
<keyword id="KW-0233">DNA recombination</keyword>
<keyword id="KW-0234">DNA repair</keyword>
<keyword id="KW-0255">Endonuclease</keyword>
<keyword id="KW-0378">Hydrolase</keyword>
<keyword id="KW-0460">Magnesium</keyword>
<keyword id="KW-0479">Metal-binding</keyword>
<keyword id="KW-0540">Nuclease</keyword>